<accession>Q8LT05</accession>
<accession>A2ZXY3</accession>
<accession>B9EZQ6</accession>
<accession>Q5JML1</accession>
<name>PCF7_ORYSJ</name>
<proteinExistence type="evidence at transcript level"/>
<protein>
    <recommendedName>
        <fullName>Transcription factor PCF7</fullName>
    </recommendedName>
</protein>
<sequence length="457" mass="48323">MSGFTNKDGRQNLASCFNFRSSPFRLTVGERELKLEEDKNQLSKGLDPWTSNPTASASTLHYLLQEKERAQQAHEQLQIYQQQQGFGSFLQHRIRQPASRGPGGGGGGGDGGGSSGESTPVEALATAFGAGRIVRSAAGRKDRHSKVCTARGLRDRRVRLAAHTAIRFYDVQDRLGYDRPSKAVDWLMRNAKAAIDELPDRAEAPPPPAAASTEQPEATEQATSTSYGFGNTTGGTMTSAASAAAGSFLPHSLGADRVSDSVKSLFPSSSTASGAASAGHDEYRGSPPDLLSRTTSNQQPQELCLTLQSNQHQIFSHVSSNHHGMISSAGVPGWPDHSQRMQAWHAPENSTGDGRGGGNGDGYMFAMPSRQGLDQSQLFSHGEPLQSSGRGWASARAWLDPLAVAAIHHQPSTMAAGQVGFGHLVGGAGGGGGFMGFLAPAAQRLEGEEEHGSEVIR</sequence>
<comment type="function">
    <text evidence="4">Transcription activator. Binds the promoter core sequence 5'-GGNCC-3'.</text>
</comment>
<comment type="subunit">
    <text evidence="5">Forms homodimers and heterodimers.</text>
</comment>
<comment type="subcellular location">
    <subcellularLocation>
        <location evidence="5">Nucleus</location>
    </subcellularLocation>
</comment>
<comment type="sequence caution" evidence="5">
    <conflict type="erroneous gene model prediction">
        <sequence resource="EMBL-CDS" id="BAD87296"/>
    </conflict>
</comment>
<comment type="sequence caution" evidence="5">
    <conflict type="erroneous gene model prediction">
        <sequence resource="EMBL-CDS" id="BAF06198"/>
    </conflict>
</comment>
<comment type="sequence caution" evidence="5">
    <conflict type="erroneous gene model prediction">
        <sequence resource="EMBL-CDS" id="EEE55400"/>
    </conflict>
</comment>
<reference key="1">
    <citation type="journal article" date="2002" name="Nature">
        <title>The genome sequence and structure of rice chromosome 1.</title>
        <authorList>
            <person name="Sasaki T."/>
            <person name="Matsumoto T."/>
            <person name="Yamamoto K."/>
            <person name="Sakata K."/>
            <person name="Baba T."/>
            <person name="Katayose Y."/>
            <person name="Wu J."/>
            <person name="Niimura Y."/>
            <person name="Cheng Z."/>
            <person name="Nagamura Y."/>
            <person name="Antonio B.A."/>
            <person name="Kanamori H."/>
            <person name="Hosokawa S."/>
            <person name="Masukawa M."/>
            <person name="Arikawa K."/>
            <person name="Chiden Y."/>
            <person name="Hayashi M."/>
            <person name="Okamoto M."/>
            <person name="Ando T."/>
            <person name="Aoki H."/>
            <person name="Arita K."/>
            <person name="Hamada M."/>
            <person name="Harada C."/>
            <person name="Hijishita S."/>
            <person name="Honda M."/>
            <person name="Ichikawa Y."/>
            <person name="Idonuma A."/>
            <person name="Iijima M."/>
            <person name="Ikeda M."/>
            <person name="Ikeno M."/>
            <person name="Ito S."/>
            <person name="Ito T."/>
            <person name="Ito Y."/>
            <person name="Ito Y."/>
            <person name="Iwabuchi A."/>
            <person name="Kamiya K."/>
            <person name="Karasawa W."/>
            <person name="Katagiri S."/>
            <person name="Kikuta A."/>
            <person name="Kobayashi N."/>
            <person name="Kono I."/>
            <person name="Machita K."/>
            <person name="Maehara T."/>
            <person name="Mizuno H."/>
            <person name="Mizubayashi T."/>
            <person name="Mukai Y."/>
            <person name="Nagasaki H."/>
            <person name="Nakashima M."/>
            <person name="Nakama Y."/>
            <person name="Nakamichi Y."/>
            <person name="Nakamura M."/>
            <person name="Namiki N."/>
            <person name="Negishi M."/>
            <person name="Ohta I."/>
            <person name="Ono N."/>
            <person name="Saji S."/>
            <person name="Sakai K."/>
            <person name="Shibata M."/>
            <person name="Shimokawa T."/>
            <person name="Shomura A."/>
            <person name="Song J."/>
            <person name="Takazaki Y."/>
            <person name="Terasawa K."/>
            <person name="Tsuji K."/>
            <person name="Waki K."/>
            <person name="Yamagata H."/>
            <person name="Yamane H."/>
            <person name="Yoshiki S."/>
            <person name="Yoshihara R."/>
            <person name="Yukawa K."/>
            <person name="Zhong H."/>
            <person name="Iwama H."/>
            <person name="Endo T."/>
            <person name="Ito H."/>
            <person name="Hahn J.H."/>
            <person name="Kim H.-I."/>
            <person name="Eun M.-Y."/>
            <person name="Yano M."/>
            <person name="Jiang J."/>
            <person name="Gojobori T."/>
        </authorList>
    </citation>
    <scope>NUCLEOTIDE SEQUENCE [LARGE SCALE GENOMIC DNA]</scope>
    <source>
        <strain>cv. Nipponbare</strain>
    </source>
</reference>
<reference key="2">
    <citation type="journal article" date="2005" name="Nature">
        <title>The map-based sequence of the rice genome.</title>
        <authorList>
            <consortium name="International rice genome sequencing project (IRGSP)"/>
        </authorList>
    </citation>
    <scope>NUCLEOTIDE SEQUENCE [LARGE SCALE GENOMIC DNA]</scope>
    <source>
        <strain>cv. Nipponbare</strain>
    </source>
</reference>
<reference key="3">
    <citation type="journal article" date="2008" name="Nucleic Acids Res.">
        <title>The rice annotation project database (RAP-DB): 2008 update.</title>
        <authorList>
            <consortium name="The rice annotation project (RAP)"/>
        </authorList>
    </citation>
    <scope>GENOME REANNOTATION</scope>
    <source>
        <strain>cv. Nipponbare</strain>
    </source>
</reference>
<reference key="4">
    <citation type="journal article" date="2013" name="Rice">
        <title>Improvement of the Oryza sativa Nipponbare reference genome using next generation sequence and optical map data.</title>
        <authorList>
            <person name="Kawahara Y."/>
            <person name="de la Bastide M."/>
            <person name="Hamilton J.P."/>
            <person name="Kanamori H."/>
            <person name="McCombie W.R."/>
            <person name="Ouyang S."/>
            <person name="Schwartz D.C."/>
            <person name="Tanaka T."/>
            <person name="Wu J."/>
            <person name="Zhou S."/>
            <person name="Childs K.L."/>
            <person name="Davidson R.M."/>
            <person name="Lin H."/>
            <person name="Quesada-Ocampo L."/>
            <person name="Vaillancourt B."/>
            <person name="Sakai H."/>
            <person name="Lee S.S."/>
            <person name="Kim J."/>
            <person name="Numa H."/>
            <person name="Itoh T."/>
            <person name="Buell C.R."/>
            <person name="Matsumoto T."/>
        </authorList>
    </citation>
    <scope>GENOME REANNOTATION</scope>
    <source>
        <strain>cv. Nipponbare</strain>
    </source>
</reference>
<reference key="5">
    <citation type="journal article" date="2005" name="PLoS Biol.">
        <title>The genomes of Oryza sativa: a history of duplications.</title>
        <authorList>
            <person name="Yu J."/>
            <person name="Wang J."/>
            <person name="Lin W."/>
            <person name="Li S."/>
            <person name="Li H."/>
            <person name="Zhou J."/>
            <person name="Ni P."/>
            <person name="Dong W."/>
            <person name="Hu S."/>
            <person name="Zeng C."/>
            <person name="Zhang J."/>
            <person name="Zhang Y."/>
            <person name="Li R."/>
            <person name="Xu Z."/>
            <person name="Li S."/>
            <person name="Li X."/>
            <person name="Zheng H."/>
            <person name="Cong L."/>
            <person name="Lin L."/>
            <person name="Yin J."/>
            <person name="Geng J."/>
            <person name="Li G."/>
            <person name="Shi J."/>
            <person name="Liu J."/>
            <person name="Lv H."/>
            <person name="Li J."/>
            <person name="Wang J."/>
            <person name="Deng Y."/>
            <person name="Ran L."/>
            <person name="Shi X."/>
            <person name="Wang X."/>
            <person name="Wu Q."/>
            <person name="Li C."/>
            <person name="Ren X."/>
            <person name="Wang J."/>
            <person name="Wang X."/>
            <person name="Li D."/>
            <person name="Liu D."/>
            <person name="Zhang X."/>
            <person name="Ji Z."/>
            <person name="Zhao W."/>
            <person name="Sun Y."/>
            <person name="Zhang Z."/>
            <person name="Bao J."/>
            <person name="Han Y."/>
            <person name="Dong L."/>
            <person name="Ji J."/>
            <person name="Chen P."/>
            <person name="Wu S."/>
            <person name="Liu J."/>
            <person name="Xiao Y."/>
            <person name="Bu D."/>
            <person name="Tan J."/>
            <person name="Yang L."/>
            <person name="Ye C."/>
            <person name="Zhang J."/>
            <person name="Xu J."/>
            <person name="Zhou Y."/>
            <person name="Yu Y."/>
            <person name="Zhang B."/>
            <person name="Zhuang S."/>
            <person name="Wei H."/>
            <person name="Liu B."/>
            <person name="Lei M."/>
            <person name="Yu H."/>
            <person name="Li Y."/>
            <person name="Xu H."/>
            <person name="Wei S."/>
            <person name="He X."/>
            <person name="Fang L."/>
            <person name="Zhang Z."/>
            <person name="Zhang Y."/>
            <person name="Huang X."/>
            <person name="Su Z."/>
            <person name="Tong W."/>
            <person name="Li J."/>
            <person name="Tong Z."/>
            <person name="Li S."/>
            <person name="Ye J."/>
            <person name="Wang L."/>
            <person name="Fang L."/>
            <person name="Lei T."/>
            <person name="Chen C.-S."/>
            <person name="Chen H.-C."/>
            <person name="Xu Z."/>
            <person name="Li H."/>
            <person name="Huang H."/>
            <person name="Zhang F."/>
            <person name="Xu H."/>
            <person name="Li N."/>
            <person name="Zhao C."/>
            <person name="Li S."/>
            <person name="Dong L."/>
            <person name="Huang Y."/>
            <person name="Li L."/>
            <person name="Xi Y."/>
            <person name="Qi Q."/>
            <person name="Li W."/>
            <person name="Zhang B."/>
            <person name="Hu W."/>
            <person name="Zhang Y."/>
            <person name="Tian X."/>
            <person name="Jiao Y."/>
            <person name="Liang X."/>
            <person name="Jin J."/>
            <person name="Gao L."/>
            <person name="Zheng W."/>
            <person name="Hao B."/>
            <person name="Liu S.-M."/>
            <person name="Wang W."/>
            <person name="Yuan L."/>
            <person name="Cao M."/>
            <person name="McDermott J."/>
            <person name="Samudrala R."/>
            <person name="Wang J."/>
            <person name="Wong G.K.-S."/>
            <person name="Yang H."/>
        </authorList>
    </citation>
    <scope>NUCLEOTIDE SEQUENCE [LARGE SCALE GENOMIC DNA]</scope>
    <source>
        <strain>cv. Nipponbare</strain>
    </source>
</reference>
<reference key="6">
    <citation type="journal article" date="2002" name="Plant J.">
        <title>DNA binding and dimerization specificity and potential targets for the TCP protein family.</title>
        <authorList>
            <person name="Kosugi S."/>
            <person name="Ohashi Y."/>
        </authorList>
    </citation>
    <scope>NUCLEOTIDE SEQUENCE [MRNA] OF 15-457</scope>
    <scope>FUNCTION</scope>
    <source>
        <strain>cv. Nipponbare</strain>
    </source>
</reference>
<keyword id="KW-0010">Activator</keyword>
<keyword id="KW-0175">Coiled coil</keyword>
<keyword id="KW-0217">Developmental protein</keyword>
<keyword id="KW-0238">DNA-binding</keyword>
<keyword id="KW-0539">Nucleus</keyword>
<keyword id="KW-1185">Reference proteome</keyword>
<keyword id="KW-0804">Transcription</keyword>
<keyword id="KW-0805">Transcription regulation</keyword>
<organism>
    <name type="scientific">Oryza sativa subsp. japonica</name>
    <name type="common">Rice</name>
    <dbReference type="NCBI Taxonomy" id="39947"/>
    <lineage>
        <taxon>Eukaryota</taxon>
        <taxon>Viridiplantae</taxon>
        <taxon>Streptophyta</taxon>
        <taxon>Embryophyta</taxon>
        <taxon>Tracheophyta</taxon>
        <taxon>Spermatophyta</taxon>
        <taxon>Magnoliopsida</taxon>
        <taxon>Liliopsida</taxon>
        <taxon>Poales</taxon>
        <taxon>Poaceae</taxon>
        <taxon>BOP clade</taxon>
        <taxon>Oryzoideae</taxon>
        <taxon>Oryzeae</taxon>
        <taxon>Oryzinae</taxon>
        <taxon>Oryza</taxon>
        <taxon>Oryza sativa</taxon>
    </lineage>
</organism>
<evidence type="ECO:0000255" key="1"/>
<evidence type="ECO:0000255" key="2">
    <source>
        <dbReference type="PROSITE-ProRule" id="PRU00701"/>
    </source>
</evidence>
<evidence type="ECO:0000256" key="3">
    <source>
        <dbReference type="SAM" id="MobiDB-lite"/>
    </source>
</evidence>
<evidence type="ECO:0000269" key="4">
    <source>
    </source>
</evidence>
<evidence type="ECO:0000305" key="5"/>
<gene>
    <name type="primary">PCF7</name>
    <name type="ordered locus">Os01g0755500</name>
    <name type="ordered locus">LOC_Os01g55100</name>
    <name type="ORF">OsJ_03497</name>
    <name type="ORF">P0503C12.34</name>
</gene>
<feature type="chain" id="PRO_0000330811" description="Transcription factor PCF7">
    <location>
        <begin position="1"/>
        <end position="457"/>
    </location>
</feature>
<feature type="domain" description="TCP" evidence="2">
    <location>
        <begin position="140"/>
        <end position="198"/>
    </location>
</feature>
<feature type="region of interest" description="Disordered" evidence="3">
    <location>
        <begin position="95"/>
        <end position="119"/>
    </location>
</feature>
<feature type="region of interest" description="Disordered" evidence="3">
    <location>
        <begin position="199"/>
        <end position="231"/>
    </location>
</feature>
<feature type="region of interest" description="Disordered" evidence="3">
    <location>
        <begin position="263"/>
        <end position="299"/>
    </location>
</feature>
<feature type="coiled-coil region" evidence="1">
    <location>
        <begin position="58"/>
        <end position="84"/>
    </location>
</feature>
<feature type="compositionally biased region" description="Gly residues" evidence="3">
    <location>
        <begin position="101"/>
        <end position="115"/>
    </location>
</feature>
<feature type="compositionally biased region" description="Low complexity" evidence="3">
    <location>
        <begin position="210"/>
        <end position="225"/>
    </location>
</feature>
<feature type="compositionally biased region" description="Low complexity" evidence="3">
    <location>
        <begin position="268"/>
        <end position="278"/>
    </location>
</feature>
<dbReference type="EMBL" id="AP003268">
    <property type="protein sequence ID" value="BAD87296.1"/>
    <property type="status" value="ALT_SEQ"/>
    <property type="molecule type" value="Genomic_DNA"/>
</dbReference>
<dbReference type="EMBL" id="AP008207">
    <property type="protein sequence ID" value="BAF06198.1"/>
    <property type="status" value="ALT_SEQ"/>
    <property type="molecule type" value="Genomic_DNA"/>
</dbReference>
<dbReference type="EMBL" id="AP014957">
    <property type="status" value="NOT_ANNOTATED_CDS"/>
    <property type="molecule type" value="Genomic_DNA"/>
</dbReference>
<dbReference type="EMBL" id="CM000138">
    <property type="protein sequence ID" value="EEE55400.1"/>
    <property type="status" value="ALT_SEQ"/>
    <property type="molecule type" value="Genomic_DNA"/>
</dbReference>
<dbReference type="EMBL" id="AB071807">
    <property type="protein sequence ID" value="BAB92954.1"/>
    <property type="molecule type" value="mRNA"/>
</dbReference>
<dbReference type="SMR" id="Q8LT05"/>
<dbReference type="FunCoup" id="Q8LT05">
    <property type="interactions" value="764"/>
</dbReference>
<dbReference type="STRING" id="39947.Q8LT05"/>
<dbReference type="PaxDb" id="39947-Q8LT05"/>
<dbReference type="KEGG" id="dosa:Os01g0755500"/>
<dbReference type="eggNOG" id="ENOG502QRP9">
    <property type="taxonomic scope" value="Eukaryota"/>
</dbReference>
<dbReference type="HOGENOM" id="CLU_048198_0_0_1"/>
<dbReference type="InParanoid" id="Q8LT05"/>
<dbReference type="Proteomes" id="UP000000763">
    <property type="component" value="Chromosome 1"/>
</dbReference>
<dbReference type="Proteomes" id="UP000007752">
    <property type="component" value="Chromosome 1"/>
</dbReference>
<dbReference type="Proteomes" id="UP000059680">
    <property type="component" value="Chromosome 1"/>
</dbReference>
<dbReference type="GO" id="GO:0005634">
    <property type="term" value="C:nucleus"/>
    <property type="evidence" value="ECO:0000318"/>
    <property type="project" value="GO_Central"/>
</dbReference>
<dbReference type="GO" id="GO:0003700">
    <property type="term" value="F:DNA-binding transcription factor activity"/>
    <property type="evidence" value="ECO:0000318"/>
    <property type="project" value="GO_Central"/>
</dbReference>
<dbReference type="GO" id="GO:0043565">
    <property type="term" value="F:sequence-specific DNA binding"/>
    <property type="evidence" value="ECO:0000318"/>
    <property type="project" value="GO_Central"/>
</dbReference>
<dbReference type="InterPro" id="IPR017887">
    <property type="entry name" value="TF_TCP_subgr"/>
</dbReference>
<dbReference type="InterPro" id="IPR005333">
    <property type="entry name" value="Transcription_factor_TCP"/>
</dbReference>
<dbReference type="PANTHER" id="PTHR31072:SF257">
    <property type="entry name" value="TRANSCRIPTION FACTOR PCF7"/>
    <property type="match status" value="1"/>
</dbReference>
<dbReference type="PANTHER" id="PTHR31072">
    <property type="entry name" value="TRANSCRIPTION FACTOR TCP4-RELATED"/>
    <property type="match status" value="1"/>
</dbReference>
<dbReference type="Pfam" id="PF03634">
    <property type="entry name" value="TCP"/>
    <property type="match status" value="1"/>
</dbReference>
<dbReference type="PROSITE" id="PS51369">
    <property type="entry name" value="TCP"/>
    <property type="match status" value="1"/>
</dbReference>